<proteinExistence type="inferred from homology"/>
<accession>A6M3M9</accession>
<protein>
    <recommendedName>
        <fullName evidence="1">Ribonuclease P protein component</fullName>
        <shortName evidence="1">RNase P protein</shortName>
        <shortName evidence="1">RNaseP protein</shortName>
        <ecNumber evidence="1">3.1.26.5</ecNumber>
    </recommendedName>
    <alternativeName>
        <fullName evidence="1">Protein C5</fullName>
    </alternativeName>
</protein>
<gene>
    <name evidence="1" type="primary">rnpA</name>
    <name type="ordered locus">Cbei_5103</name>
</gene>
<reference key="1">
    <citation type="submission" date="2007-06" db="EMBL/GenBank/DDBJ databases">
        <title>Complete sequence of Clostridium beijerinckii NCIMB 8052.</title>
        <authorList>
            <consortium name="US DOE Joint Genome Institute"/>
            <person name="Copeland A."/>
            <person name="Lucas S."/>
            <person name="Lapidus A."/>
            <person name="Barry K."/>
            <person name="Detter J.C."/>
            <person name="Glavina del Rio T."/>
            <person name="Hammon N."/>
            <person name="Israni S."/>
            <person name="Dalin E."/>
            <person name="Tice H."/>
            <person name="Pitluck S."/>
            <person name="Sims D."/>
            <person name="Brettin T."/>
            <person name="Bruce D."/>
            <person name="Tapia R."/>
            <person name="Brainard J."/>
            <person name="Schmutz J."/>
            <person name="Larimer F."/>
            <person name="Land M."/>
            <person name="Hauser L."/>
            <person name="Kyrpides N."/>
            <person name="Mikhailova N."/>
            <person name="Bennet G."/>
            <person name="Cann I."/>
            <person name="Chen J.-S."/>
            <person name="Contreras A.L."/>
            <person name="Jones D."/>
            <person name="Kashket E."/>
            <person name="Mitchell W."/>
            <person name="Stoddard S."/>
            <person name="Schwarz W."/>
            <person name="Qureshi N."/>
            <person name="Young M."/>
            <person name="Shi Z."/>
            <person name="Ezeji T."/>
            <person name="White B."/>
            <person name="Blaschek H."/>
            <person name="Richardson P."/>
        </authorList>
    </citation>
    <scope>NUCLEOTIDE SEQUENCE [LARGE SCALE GENOMIC DNA]</scope>
    <source>
        <strain>ATCC 51743 / NCIMB 8052</strain>
    </source>
</reference>
<organism>
    <name type="scientific">Clostridium beijerinckii (strain ATCC 51743 / NCIMB 8052)</name>
    <name type="common">Clostridium acetobutylicum</name>
    <dbReference type="NCBI Taxonomy" id="290402"/>
    <lineage>
        <taxon>Bacteria</taxon>
        <taxon>Bacillati</taxon>
        <taxon>Bacillota</taxon>
        <taxon>Clostridia</taxon>
        <taxon>Eubacteriales</taxon>
        <taxon>Clostridiaceae</taxon>
        <taxon>Clostridium</taxon>
    </lineage>
</organism>
<comment type="function">
    <text evidence="1">RNaseP catalyzes the removal of the 5'-leader sequence from pre-tRNA to produce the mature 5'-terminus. It can also cleave other RNA substrates such as 4.5S RNA. The protein component plays an auxiliary but essential role in vivo by binding to the 5'-leader sequence and broadening the substrate specificity of the ribozyme.</text>
</comment>
<comment type="catalytic activity">
    <reaction evidence="1">
        <text>Endonucleolytic cleavage of RNA, removing 5'-extranucleotides from tRNA precursor.</text>
        <dbReference type="EC" id="3.1.26.5"/>
    </reaction>
</comment>
<comment type="subunit">
    <text evidence="1">Consists of a catalytic RNA component (M1 or rnpB) and a protein subunit.</text>
</comment>
<comment type="similarity">
    <text evidence="1">Belongs to the RnpA family.</text>
</comment>
<evidence type="ECO:0000255" key="1">
    <source>
        <dbReference type="HAMAP-Rule" id="MF_00227"/>
    </source>
</evidence>
<sequence length="125" mass="14827">MIYRLKKNFEFTIVYKRGKSFANELLVMYILKNRRNKDRDFLAYSKVGISVSKKVGNSVVRSRCKRLITESFRLNYNYIVKGYDFVFIARNPLQSKSYFEVERAMRSLIKKAGLYNNEEITNTPN</sequence>
<dbReference type="EC" id="3.1.26.5" evidence="1"/>
<dbReference type="EMBL" id="CP000721">
    <property type="protein sequence ID" value="ABR37209.1"/>
    <property type="molecule type" value="Genomic_DNA"/>
</dbReference>
<dbReference type="RefSeq" id="WP_012061252.1">
    <property type="nucleotide sequence ID" value="NC_009617.1"/>
</dbReference>
<dbReference type="SMR" id="A6M3M9"/>
<dbReference type="GeneID" id="66348066"/>
<dbReference type="KEGG" id="cbe:Cbei_5103"/>
<dbReference type="eggNOG" id="COG0594">
    <property type="taxonomic scope" value="Bacteria"/>
</dbReference>
<dbReference type="HOGENOM" id="CLU_117179_9_1_9"/>
<dbReference type="Proteomes" id="UP000000565">
    <property type="component" value="Chromosome"/>
</dbReference>
<dbReference type="GO" id="GO:0030677">
    <property type="term" value="C:ribonuclease P complex"/>
    <property type="evidence" value="ECO:0007669"/>
    <property type="project" value="TreeGrafter"/>
</dbReference>
<dbReference type="GO" id="GO:0042781">
    <property type="term" value="F:3'-tRNA processing endoribonuclease activity"/>
    <property type="evidence" value="ECO:0007669"/>
    <property type="project" value="TreeGrafter"/>
</dbReference>
<dbReference type="GO" id="GO:0004526">
    <property type="term" value="F:ribonuclease P activity"/>
    <property type="evidence" value="ECO:0007669"/>
    <property type="project" value="UniProtKB-UniRule"/>
</dbReference>
<dbReference type="GO" id="GO:0000049">
    <property type="term" value="F:tRNA binding"/>
    <property type="evidence" value="ECO:0007669"/>
    <property type="project" value="UniProtKB-UniRule"/>
</dbReference>
<dbReference type="GO" id="GO:0001682">
    <property type="term" value="P:tRNA 5'-leader removal"/>
    <property type="evidence" value="ECO:0007669"/>
    <property type="project" value="UniProtKB-UniRule"/>
</dbReference>
<dbReference type="Gene3D" id="3.30.230.10">
    <property type="match status" value="1"/>
</dbReference>
<dbReference type="HAMAP" id="MF_00227">
    <property type="entry name" value="RNase_P"/>
    <property type="match status" value="1"/>
</dbReference>
<dbReference type="InterPro" id="IPR020568">
    <property type="entry name" value="Ribosomal_Su5_D2-typ_SF"/>
</dbReference>
<dbReference type="InterPro" id="IPR014721">
    <property type="entry name" value="Ribsml_uS5_D2-typ_fold_subgr"/>
</dbReference>
<dbReference type="InterPro" id="IPR000100">
    <property type="entry name" value="RNase_P"/>
</dbReference>
<dbReference type="NCBIfam" id="TIGR00188">
    <property type="entry name" value="rnpA"/>
    <property type="match status" value="1"/>
</dbReference>
<dbReference type="PANTHER" id="PTHR33992">
    <property type="entry name" value="RIBONUCLEASE P PROTEIN COMPONENT"/>
    <property type="match status" value="1"/>
</dbReference>
<dbReference type="PANTHER" id="PTHR33992:SF1">
    <property type="entry name" value="RIBONUCLEASE P PROTEIN COMPONENT"/>
    <property type="match status" value="1"/>
</dbReference>
<dbReference type="Pfam" id="PF00825">
    <property type="entry name" value="Ribonuclease_P"/>
    <property type="match status" value="1"/>
</dbReference>
<dbReference type="SUPFAM" id="SSF54211">
    <property type="entry name" value="Ribosomal protein S5 domain 2-like"/>
    <property type="match status" value="1"/>
</dbReference>
<feature type="chain" id="PRO_1000078192" description="Ribonuclease P protein component">
    <location>
        <begin position="1"/>
        <end position="125"/>
    </location>
</feature>
<keyword id="KW-0255">Endonuclease</keyword>
<keyword id="KW-0378">Hydrolase</keyword>
<keyword id="KW-0540">Nuclease</keyword>
<keyword id="KW-0694">RNA-binding</keyword>
<keyword id="KW-0819">tRNA processing</keyword>
<name>RNPA_CLOB8</name>